<reference key="1">
    <citation type="journal article" date="2006" name="BMC Evol. Biol.">
        <title>The complete chloroplast genome sequence of the chlorophycean green alga Scenedesmus obliquus reveals a compact gene organization and a biased distribution of genes on the two DNA strands.</title>
        <authorList>
            <person name="de Cambiaire J.-C."/>
            <person name="Otis C."/>
            <person name="Lemieux C."/>
            <person name="Turmel M."/>
        </authorList>
    </citation>
    <scope>NUCLEOTIDE SEQUENCE [LARGE SCALE GENOMIC DNA]</scope>
    <source>
        <strain>UTEX 393</strain>
    </source>
</reference>
<comment type="function">
    <text evidence="1">Produces ATP from ADP in the presence of a proton gradient across the membrane. The alpha chain is a regulatory subunit.</text>
</comment>
<comment type="catalytic activity">
    <reaction evidence="1">
        <text>ATP + H2O + 4 H(+)(in) = ADP + phosphate + 5 H(+)(out)</text>
        <dbReference type="Rhea" id="RHEA:57720"/>
        <dbReference type="ChEBI" id="CHEBI:15377"/>
        <dbReference type="ChEBI" id="CHEBI:15378"/>
        <dbReference type="ChEBI" id="CHEBI:30616"/>
        <dbReference type="ChEBI" id="CHEBI:43474"/>
        <dbReference type="ChEBI" id="CHEBI:456216"/>
        <dbReference type="EC" id="7.1.2.2"/>
    </reaction>
</comment>
<comment type="subunit">
    <text evidence="1">F-type ATPases have 2 components, CF(1) - the catalytic core - and CF(0) - the membrane proton channel. CF(1) has five subunits: alpha(3), beta(3), gamma(1), delta(1), epsilon(1). CF(0) has four main subunits: a, b, b' and c.</text>
</comment>
<comment type="subcellular location">
    <subcellularLocation>
        <location evidence="1">Plastid</location>
        <location evidence="1">Chloroplast thylakoid membrane</location>
        <topology evidence="1">Peripheral membrane protein</topology>
    </subcellularLocation>
</comment>
<comment type="similarity">
    <text evidence="1">Belongs to the ATPase alpha/beta chains family.</text>
</comment>
<organism>
    <name type="scientific">Tetradesmus obliquus</name>
    <name type="common">Green alga</name>
    <name type="synonym">Acutodesmus obliquus</name>
    <dbReference type="NCBI Taxonomy" id="3088"/>
    <lineage>
        <taxon>Eukaryota</taxon>
        <taxon>Viridiplantae</taxon>
        <taxon>Chlorophyta</taxon>
        <taxon>core chlorophytes</taxon>
        <taxon>Chlorophyceae</taxon>
        <taxon>CS clade</taxon>
        <taxon>Sphaeropleales</taxon>
        <taxon>Scenedesmaceae</taxon>
        <taxon>Tetradesmus</taxon>
    </lineage>
</organism>
<gene>
    <name evidence="1" type="primary">atpA</name>
</gene>
<proteinExistence type="inferred from homology"/>
<evidence type="ECO:0000255" key="1">
    <source>
        <dbReference type="HAMAP-Rule" id="MF_01346"/>
    </source>
</evidence>
<geneLocation type="chloroplast"/>
<sequence length="507" mass="54686">MSMRTPEELSNLIKGLIEEYTPEVKMVDFGIVFQVGDGIARIYGLDRVMSGELLEFEDGTLGIALNLEANNVGAVLLGDGLKITEGSRVRCTGKIAEIPVGENYLGRVVDALARPVDGKGAISTNDTRAIESPAPGIVSRRSVYEPLQTGLVAVDAMIPIGRGQRELIIGDRQTGKTAIAVDTILNQKGKGVICVYVAIGQKASSVAQVLNSLKERGALDYTIIVMANANEPSTLQYLAPYTGATLAEYFMYTGRPTLTIYDDLSKQAQAYREMSLLLRRPPGREAYPGDVFYLHSRLLERAAKLSDALGEGSMTALPVVETQEGDVSAYIPTNVISITDGQIFLSGDLFNAGIRPAINVGISVSRVGSAAQIKAMKQVAGTLKLSLAQFAELEAFSQFASDLDAATQKQLARGSRLREILKQPQNSPLSVEEQVASIYTGTNGYLDSLEVLDVRPFLSGLRTYLTNNVPQYGEIVRKTNTFTPEAESLLKKAITDFLAEFGATKSN</sequence>
<name>ATPA_TETOB</name>
<feature type="chain" id="PRO_0000256124" description="ATP synthase subunit alpha, chloroplastic">
    <location>
        <begin position="1"/>
        <end position="507"/>
    </location>
</feature>
<feature type="binding site" evidence="1">
    <location>
        <begin position="170"/>
        <end position="177"/>
    </location>
    <ligand>
        <name>ATP</name>
        <dbReference type="ChEBI" id="CHEBI:30616"/>
    </ligand>
</feature>
<feature type="site" description="Required for activity" evidence="1">
    <location>
        <position position="363"/>
    </location>
</feature>
<accession>Q1KVU0</accession>
<protein>
    <recommendedName>
        <fullName evidence="1">ATP synthase subunit alpha, chloroplastic</fullName>
        <ecNumber evidence="1">7.1.2.2</ecNumber>
    </recommendedName>
    <alternativeName>
        <fullName evidence="1">ATP synthase F1 sector subunit alpha</fullName>
    </alternativeName>
    <alternativeName>
        <fullName evidence="1">F-ATPase subunit alpha</fullName>
    </alternativeName>
</protein>
<dbReference type="EC" id="7.1.2.2" evidence="1"/>
<dbReference type="EMBL" id="DQ396875">
    <property type="protein sequence ID" value="ABD48267.1"/>
    <property type="molecule type" value="Genomic_DNA"/>
</dbReference>
<dbReference type="RefSeq" id="YP_635984.1">
    <property type="nucleotide sequence ID" value="NC_008101.1"/>
</dbReference>
<dbReference type="SMR" id="Q1KVU0"/>
<dbReference type="GeneID" id="4099768"/>
<dbReference type="GO" id="GO:0009535">
    <property type="term" value="C:chloroplast thylakoid membrane"/>
    <property type="evidence" value="ECO:0007669"/>
    <property type="project" value="UniProtKB-SubCell"/>
</dbReference>
<dbReference type="GO" id="GO:0045259">
    <property type="term" value="C:proton-transporting ATP synthase complex"/>
    <property type="evidence" value="ECO:0007669"/>
    <property type="project" value="UniProtKB-KW"/>
</dbReference>
<dbReference type="GO" id="GO:0043531">
    <property type="term" value="F:ADP binding"/>
    <property type="evidence" value="ECO:0007669"/>
    <property type="project" value="TreeGrafter"/>
</dbReference>
<dbReference type="GO" id="GO:0005524">
    <property type="term" value="F:ATP binding"/>
    <property type="evidence" value="ECO:0007669"/>
    <property type="project" value="UniProtKB-UniRule"/>
</dbReference>
<dbReference type="GO" id="GO:0046933">
    <property type="term" value="F:proton-transporting ATP synthase activity, rotational mechanism"/>
    <property type="evidence" value="ECO:0007669"/>
    <property type="project" value="UniProtKB-UniRule"/>
</dbReference>
<dbReference type="CDD" id="cd18113">
    <property type="entry name" value="ATP-synt_F1_alpha_C"/>
    <property type="match status" value="1"/>
</dbReference>
<dbReference type="CDD" id="cd18116">
    <property type="entry name" value="ATP-synt_F1_alpha_N"/>
    <property type="match status" value="1"/>
</dbReference>
<dbReference type="CDD" id="cd01132">
    <property type="entry name" value="F1-ATPase_alpha_CD"/>
    <property type="match status" value="1"/>
</dbReference>
<dbReference type="FunFam" id="1.20.150.20:FF:000001">
    <property type="entry name" value="ATP synthase subunit alpha"/>
    <property type="match status" value="1"/>
</dbReference>
<dbReference type="FunFam" id="2.40.30.20:FF:000001">
    <property type="entry name" value="ATP synthase subunit alpha"/>
    <property type="match status" value="1"/>
</dbReference>
<dbReference type="FunFam" id="3.40.50.300:FF:000002">
    <property type="entry name" value="ATP synthase subunit alpha"/>
    <property type="match status" value="1"/>
</dbReference>
<dbReference type="Gene3D" id="2.40.30.20">
    <property type="match status" value="1"/>
</dbReference>
<dbReference type="Gene3D" id="1.20.150.20">
    <property type="entry name" value="ATP synthase alpha/beta chain, C-terminal domain"/>
    <property type="match status" value="1"/>
</dbReference>
<dbReference type="Gene3D" id="3.40.50.300">
    <property type="entry name" value="P-loop containing nucleotide triphosphate hydrolases"/>
    <property type="match status" value="1"/>
</dbReference>
<dbReference type="HAMAP" id="MF_01346">
    <property type="entry name" value="ATP_synth_alpha_bact"/>
    <property type="match status" value="1"/>
</dbReference>
<dbReference type="InterPro" id="IPR023366">
    <property type="entry name" value="ATP_synth_asu-like_sf"/>
</dbReference>
<dbReference type="InterPro" id="IPR000793">
    <property type="entry name" value="ATP_synth_asu_C"/>
</dbReference>
<dbReference type="InterPro" id="IPR038376">
    <property type="entry name" value="ATP_synth_asu_C_sf"/>
</dbReference>
<dbReference type="InterPro" id="IPR033732">
    <property type="entry name" value="ATP_synth_F1_a_nt-bd_dom"/>
</dbReference>
<dbReference type="InterPro" id="IPR005294">
    <property type="entry name" value="ATP_synth_F1_asu"/>
</dbReference>
<dbReference type="InterPro" id="IPR020003">
    <property type="entry name" value="ATPase_a/bsu_AS"/>
</dbReference>
<dbReference type="InterPro" id="IPR004100">
    <property type="entry name" value="ATPase_F1/V1/A1_a/bsu_N"/>
</dbReference>
<dbReference type="InterPro" id="IPR036121">
    <property type="entry name" value="ATPase_F1/V1/A1_a/bsu_N_sf"/>
</dbReference>
<dbReference type="InterPro" id="IPR000194">
    <property type="entry name" value="ATPase_F1/V1/A1_a/bsu_nucl-bd"/>
</dbReference>
<dbReference type="InterPro" id="IPR027417">
    <property type="entry name" value="P-loop_NTPase"/>
</dbReference>
<dbReference type="NCBIfam" id="TIGR00962">
    <property type="entry name" value="atpA"/>
    <property type="match status" value="1"/>
</dbReference>
<dbReference type="NCBIfam" id="NF009884">
    <property type="entry name" value="PRK13343.1"/>
    <property type="match status" value="1"/>
</dbReference>
<dbReference type="PANTHER" id="PTHR48082">
    <property type="entry name" value="ATP SYNTHASE SUBUNIT ALPHA, MITOCHONDRIAL"/>
    <property type="match status" value="1"/>
</dbReference>
<dbReference type="PANTHER" id="PTHR48082:SF2">
    <property type="entry name" value="ATP SYNTHASE SUBUNIT ALPHA, MITOCHONDRIAL"/>
    <property type="match status" value="1"/>
</dbReference>
<dbReference type="Pfam" id="PF00006">
    <property type="entry name" value="ATP-synt_ab"/>
    <property type="match status" value="1"/>
</dbReference>
<dbReference type="Pfam" id="PF00306">
    <property type="entry name" value="ATP-synt_ab_C"/>
    <property type="match status" value="1"/>
</dbReference>
<dbReference type="Pfam" id="PF02874">
    <property type="entry name" value="ATP-synt_ab_N"/>
    <property type="match status" value="1"/>
</dbReference>
<dbReference type="PIRSF" id="PIRSF039088">
    <property type="entry name" value="F_ATPase_subunit_alpha"/>
    <property type="match status" value="1"/>
</dbReference>
<dbReference type="SUPFAM" id="SSF47917">
    <property type="entry name" value="C-terminal domain of alpha and beta subunits of F1 ATP synthase"/>
    <property type="match status" value="1"/>
</dbReference>
<dbReference type="SUPFAM" id="SSF50615">
    <property type="entry name" value="N-terminal domain of alpha and beta subunits of F1 ATP synthase"/>
    <property type="match status" value="1"/>
</dbReference>
<dbReference type="SUPFAM" id="SSF52540">
    <property type="entry name" value="P-loop containing nucleoside triphosphate hydrolases"/>
    <property type="match status" value="1"/>
</dbReference>
<dbReference type="PROSITE" id="PS00152">
    <property type="entry name" value="ATPASE_ALPHA_BETA"/>
    <property type="match status" value="1"/>
</dbReference>
<keyword id="KW-0066">ATP synthesis</keyword>
<keyword id="KW-0067">ATP-binding</keyword>
<keyword id="KW-0139">CF(1)</keyword>
<keyword id="KW-0150">Chloroplast</keyword>
<keyword id="KW-0375">Hydrogen ion transport</keyword>
<keyword id="KW-0406">Ion transport</keyword>
<keyword id="KW-0472">Membrane</keyword>
<keyword id="KW-0547">Nucleotide-binding</keyword>
<keyword id="KW-0934">Plastid</keyword>
<keyword id="KW-0793">Thylakoid</keyword>
<keyword id="KW-1278">Translocase</keyword>
<keyword id="KW-0813">Transport</keyword>